<sequence length="195" mass="21736">MTRSYRGDRRTKETDIELILNLDGKGQGKIATGIGFFDHMLEQIMKHGQLDLELKAVGDIEVDFHHTVEDVGILMGKAIAEALGDKKGIVRYATAFIPMDEALSMVSMDISGRPFLQYGVNYSGEFVGQFEVQLVEEFFRALAFNSGITLHIQTQYGRNNHHIVESIFKAFAKALREAITIDPRIEGVLSTKGSL</sequence>
<gene>
    <name evidence="1" type="primary">hisB</name>
    <name type="ordered locus">Amet_0574</name>
</gene>
<dbReference type="EC" id="4.2.1.19" evidence="1"/>
<dbReference type="EMBL" id="CP000724">
    <property type="protein sequence ID" value="ABR46801.1"/>
    <property type="molecule type" value="Genomic_DNA"/>
</dbReference>
<dbReference type="RefSeq" id="WP_011971709.1">
    <property type="nucleotide sequence ID" value="NC_009633.1"/>
</dbReference>
<dbReference type="SMR" id="A6TKT3"/>
<dbReference type="STRING" id="293826.Amet_0574"/>
<dbReference type="KEGG" id="amt:Amet_0574"/>
<dbReference type="eggNOG" id="COG0131">
    <property type="taxonomic scope" value="Bacteria"/>
</dbReference>
<dbReference type="HOGENOM" id="CLU_044308_3_0_9"/>
<dbReference type="OrthoDB" id="9790411at2"/>
<dbReference type="UniPathway" id="UPA00031">
    <property type="reaction ID" value="UER00011"/>
</dbReference>
<dbReference type="Proteomes" id="UP000001572">
    <property type="component" value="Chromosome"/>
</dbReference>
<dbReference type="GO" id="GO:0005737">
    <property type="term" value="C:cytoplasm"/>
    <property type="evidence" value="ECO:0007669"/>
    <property type="project" value="UniProtKB-SubCell"/>
</dbReference>
<dbReference type="GO" id="GO:0004424">
    <property type="term" value="F:imidazoleglycerol-phosphate dehydratase activity"/>
    <property type="evidence" value="ECO:0007669"/>
    <property type="project" value="UniProtKB-UniRule"/>
</dbReference>
<dbReference type="GO" id="GO:0000105">
    <property type="term" value="P:L-histidine biosynthetic process"/>
    <property type="evidence" value="ECO:0007669"/>
    <property type="project" value="UniProtKB-UniRule"/>
</dbReference>
<dbReference type="CDD" id="cd07914">
    <property type="entry name" value="IGPD"/>
    <property type="match status" value="1"/>
</dbReference>
<dbReference type="FunFam" id="3.30.230.40:FF:000001">
    <property type="entry name" value="Imidazoleglycerol-phosphate dehydratase HisB"/>
    <property type="match status" value="1"/>
</dbReference>
<dbReference type="FunFam" id="3.30.230.40:FF:000003">
    <property type="entry name" value="Imidazoleglycerol-phosphate dehydratase HisB"/>
    <property type="match status" value="1"/>
</dbReference>
<dbReference type="Gene3D" id="3.30.230.40">
    <property type="entry name" value="Imidazole glycerol phosphate dehydratase, domain 1"/>
    <property type="match status" value="2"/>
</dbReference>
<dbReference type="HAMAP" id="MF_00076">
    <property type="entry name" value="HisB"/>
    <property type="match status" value="1"/>
</dbReference>
<dbReference type="InterPro" id="IPR038494">
    <property type="entry name" value="IGPD_sf"/>
</dbReference>
<dbReference type="InterPro" id="IPR000807">
    <property type="entry name" value="ImidazoleglycerolP_deHydtase"/>
</dbReference>
<dbReference type="InterPro" id="IPR020565">
    <property type="entry name" value="ImidazoleglycerP_deHydtase_CS"/>
</dbReference>
<dbReference type="InterPro" id="IPR020568">
    <property type="entry name" value="Ribosomal_Su5_D2-typ_SF"/>
</dbReference>
<dbReference type="NCBIfam" id="NF002111">
    <property type="entry name" value="PRK00951.2-1"/>
    <property type="match status" value="1"/>
</dbReference>
<dbReference type="NCBIfam" id="NF002114">
    <property type="entry name" value="PRK00951.2-4"/>
    <property type="match status" value="1"/>
</dbReference>
<dbReference type="PANTHER" id="PTHR23133:SF2">
    <property type="entry name" value="IMIDAZOLEGLYCEROL-PHOSPHATE DEHYDRATASE"/>
    <property type="match status" value="1"/>
</dbReference>
<dbReference type="PANTHER" id="PTHR23133">
    <property type="entry name" value="IMIDAZOLEGLYCEROL-PHOSPHATE DEHYDRATASE HIS7"/>
    <property type="match status" value="1"/>
</dbReference>
<dbReference type="Pfam" id="PF00475">
    <property type="entry name" value="IGPD"/>
    <property type="match status" value="1"/>
</dbReference>
<dbReference type="SUPFAM" id="SSF54211">
    <property type="entry name" value="Ribosomal protein S5 domain 2-like"/>
    <property type="match status" value="2"/>
</dbReference>
<dbReference type="PROSITE" id="PS00954">
    <property type="entry name" value="IGP_DEHYDRATASE_1"/>
    <property type="match status" value="1"/>
</dbReference>
<dbReference type="PROSITE" id="PS00955">
    <property type="entry name" value="IGP_DEHYDRATASE_2"/>
    <property type="match status" value="1"/>
</dbReference>
<proteinExistence type="inferred from homology"/>
<accession>A6TKT3</accession>
<reference key="1">
    <citation type="journal article" date="2016" name="Genome Announc.">
        <title>Complete genome sequence of Alkaliphilus metalliredigens strain QYMF, an alkaliphilic and metal-reducing bacterium isolated from borax-contaminated leachate ponds.</title>
        <authorList>
            <person name="Hwang C."/>
            <person name="Copeland A."/>
            <person name="Lucas S."/>
            <person name="Lapidus A."/>
            <person name="Barry K."/>
            <person name="Detter J.C."/>
            <person name="Glavina Del Rio T."/>
            <person name="Hammon N."/>
            <person name="Israni S."/>
            <person name="Dalin E."/>
            <person name="Tice H."/>
            <person name="Pitluck S."/>
            <person name="Chertkov O."/>
            <person name="Brettin T."/>
            <person name="Bruce D."/>
            <person name="Han C."/>
            <person name="Schmutz J."/>
            <person name="Larimer F."/>
            <person name="Land M.L."/>
            <person name="Hauser L."/>
            <person name="Kyrpides N."/>
            <person name="Mikhailova N."/>
            <person name="Ye Q."/>
            <person name="Zhou J."/>
            <person name="Richardson P."/>
            <person name="Fields M.W."/>
        </authorList>
    </citation>
    <scope>NUCLEOTIDE SEQUENCE [LARGE SCALE GENOMIC DNA]</scope>
    <source>
        <strain>QYMF</strain>
    </source>
</reference>
<comment type="catalytic activity">
    <reaction evidence="1">
        <text>D-erythro-1-(imidazol-4-yl)glycerol 3-phosphate = 3-(imidazol-4-yl)-2-oxopropyl phosphate + H2O</text>
        <dbReference type="Rhea" id="RHEA:11040"/>
        <dbReference type="ChEBI" id="CHEBI:15377"/>
        <dbReference type="ChEBI" id="CHEBI:57766"/>
        <dbReference type="ChEBI" id="CHEBI:58278"/>
        <dbReference type="EC" id="4.2.1.19"/>
    </reaction>
</comment>
<comment type="pathway">
    <text evidence="1">Amino-acid biosynthesis; L-histidine biosynthesis; L-histidine from 5-phospho-alpha-D-ribose 1-diphosphate: step 6/9.</text>
</comment>
<comment type="subcellular location">
    <subcellularLocation>
        <location evidence="1">Cytoplasm</location>
    </subcellularLocation>
</comment>
<comment type="similarity">
    <text evidence="1">Belongs to the imidazoleglycerol-phosphate dehydratase family.</text>
</comment>
<keyword id="KW-0028">Amino-acid biosynthesis</keyword>
<keyword id="KW-0963">Cytoplasm</keyword>
<keyword id="KW-0368">Histidine biosynthesis</keyword>
<keyword id="KW-0456">Lyase</keyword>
<keyword id="KW-1185">Reference proteome</keyword>
<feature type="chain" id="PRO_1000057515" description="Imidazoleglycerol-phosphate dehydratase">
    <location>
        <begin position="1"/>
        <end position="195"/>
    </location>
</feature>
<organism>
    <name type="scientific">Alkaliphilus metalliredigens (strain QYMF)</name>
    <dbReference type="NCBI Taxonomy" id="293826"/>
    <lineage>
        <taxon>Bacteria</taxon>
        <taxon>Bacillati</taxon>
        <taxon>Bacillota</taxon>
        <taxon>Clostridia</taxon>
        <taxon>Peptostreptococcales</taxon>
        <taxon>Natronincolaceae</taxon>
        <taxon>Alkaliphilus</taxon>
    </lineage>
</organism>
<name>HIS7_ALKMQ</name>
<evidence type="ECO:0000255" key="1">
    <source>
        <dbReference type="HAMAP-Rule" id="MF_00076"/>
    </source>
</evidence>
<protein>
    <recommendedName>
        <fullName evidence="1">Imidazoleglycerol-phosphate dehydratase</fullName>
        <shortName evidence="1">IGPD</shortName>
        <ecNumber evidence="1">4.2.1.19</ecNumber>
    </recommendedName>
</protein>